<name>YIU0_YEAST</name>
<keyword id="KW-1185">Reference proteome</keyword>
<sequence>MTFFLKRKISFFLSGIAQTFLFLPILLNRSVIHVVFLTVVLGHRIPWDSVIRCNNTGTTHSAVSSRTELLLPIGGVINNWKRRAWNGFSIQWIWRYSFVY</sequence>
<feature type="chain" id="PRO_0000203006" description="Uncharacterized protein YIR020C">
    <location>
        <begin position="1"/>
        <end position="100"/>
    </location>
</feature>
<organism>
    <name type="scientific">Saccharomyces cerevisiae (strain ATCC 204508 / S288c)</name>
    <name type="common">Baker's yeast</name>
    <dbReference type="NCBI Taxonomy" id="559292"/>
    <lineage>
        <taxon>Eukaryota</taxon>
        <taxon>Fungi</taxon>
        <taxon>Dikarya</taxon>
        <taxon>Ascomycota</taxon>
        <taxon>Saccharomycotina</taxon>
        <taxon>Saccharomycetes</taxon>
        <taxon>Saccharomycetales</taxon>
        <taxon>Saccharomycetaceae</taxon>
        <taxon>Saccharomyces</taxon>
    </lineage>
</organism>
<dbReference type="EMBL" id="Z38061">
    <property type="protein sequence ID" value="CAA86177.1"/>
    <property type="molecule type" value="Genomic_DNA"/>
</dbReference>
<dbReference type="EMBL" id="BK006942">
    <property type="protein sequence ID" value="DAA35119.1"/>
    <property type="molecule type" value="Genomic_DNA"/>
</dbReference>
<dbReference type="PIR" id="S48479">
    <property type="entry name" value="S48479"/>
</dbReference>
<dbReference type="RefSeq" id="NP_001257681.1">
    <property type="nucleotide sequence ID" value="NM_001270752.1"/>
</dbReference>
<dbReference type="BioGRID" id="300786">
    <property type="interactions" value="13"/>
</dbReference>
<dbReference type="FunCoup" id="P40575">
    <property type="interactions" value="37"/>
</dbReference>
<dbReference type="IntAct" id="P40575">
    <property type="interactions" value="1"/>
</dbReference>
<dbReference type="STRING" id="4932.YIR020C"/>
<dbReference type="GlyGen" id="P40575">
    <property type="glycosylation" value="2 sites, 1 O-linked glycan (2 sites)"/>
</dbReference>
<dbReference type="PaxDb" id="4932-YIR020C"/>
<dbReference type="EnsemblFungi" id="YIR020C_mRNA">
    <property type="protein sequence ID" value="YIR020C"/>
    <property type="gene ID" value="YIR020C"/>
</dbReference>
<dbReference type="GeneID" id="854837"/>
<dbReference type="KEGG" id="sce:YIR020C"/>
<dbReference type="AGR" id="SGD:S000001459"/>
<dbReference type="SGD" id="S000001459">
    <property type="gene designation" value="YIR020C"/>
</dbReference>
<dbReference type="VEuPathDB" id="FungiDB:YIR020C"/>
<dbReference type="HOGENOM" id="CLU_2308277_0_0_1"/>
<dbReference type="InParanoid" id="P40575"/>
<dbReference type="BioCyc" id="YEAST:G3O-31440-MONOMER"/>
<dbReference type="BioGRID-ORCS" id="854837">
    <property type="hits" value="0 hits in 10 CRISPR screens"/>
</dbReference>
<dbReference type="PRO" id="PR:P40575"/>
<dbReference type="Proteomes" id="UP000002311">
    <property type="component" value="Chromosome IX"/>
</dbReference>
<dbReference type="RNAct" id="P40575">
    <property type="molecule type" value="protein"/>
</dbReference>
<reference key="1">
    <citation type="journal article" date="1997" name="Nature">
        <title>The nucleotide sequence of Saccharomyces cerevisiae chromosome IX.</title>
        <authorList>
            <person name="Churcher C.M."/>
            <person name="Bowman S."/>
            <person name="Badcock K."/>
            <person name="Bankier A.T."/>
            <person name="Brown D."/>
            <person name="Chillingworth T."/>
            <person name="Connor R."/>
            <person name="Devlin K."/>
            <person name="Gentles S."/>
            <person name="Hamlin N."/>
            <person name="Harris D.E."/>
            <person name="Horsnell T."/>
            <person name="Hunt S."/>
            <person name="Jagels K."/>
            <person name="Jones M."/>
            <person name="Lye G."/>
            <person name="Moule S."/>
            <person name="Odell C."/>
            <person name="Pearson D."/>
            <person name="Rajandream M.A."/>
            <person name="Rice P."/>
            <person name="Rowley N."/>
            <person name="Skelton J."/>
            <person name="Smith V."/>
            <person name="Walsh S.V."/>
            <person name="Whitehead S."/>
            <person name="Barrell B.G."/>
        </authorList>
    </citation>
    <scope>NUCLEOTIDE SEQUENCE [LARGE SCALE GENOMIC DNA]</scope>
    <source>
        <strain>ATCC 204508 / S288c</strain>
    </source>
</reference>
<reference key="2">
    <citation type="journal article" date="2014" name="G3 (Bethesda)">
        <title>The reference genome sequence of Saccharomyces cerevisiae: Then and now.</title>
        <authorList>
            <person name="Engel S.R."/>
            <person name="Dietrich F.S."/>
            <person name="Fisk D.G."/>
            <person name="Binkley G."/>
            <person name="Balakrishnan R."/>
            <person name="Costanzo M.C."/>
            <person name="Dwight S.S."/>
            <person name="Hitz B.C."/>
            <person name="Karra K."/>
            <person name="Nash R.S."/>
            <person name="Weng S."/>
            <person name="Wong E.D."/>
            <person name="Lloyd P."/>
            <person name="Skrzypek M.S."/>
            <person name="Miyasato S.R."/>
            <person name="Simison M."/>
            <person name="Cherry J.M."/>
        </authorList>
    </citation>
    <scope>GENOME REANNOTATION</scope>
    <source>
        <strain>ATCC 204508 / S288c</strain>
    </source>
</reference>
<reference key="3">
    <citation type="journal article" date="2012" name="Science">
        <title>High-resolution view of the yeast meiotic program revealed by ribosome profiling.</title>
        <authorList>
            <person name="Brar G.A."/>
            <person name="Yassour M."/>
            <person name="Friedman N."/>
            <person name="Regev A."/>
            <person name="Ingolia N.T."/>
            <person name="Weissman J.S."/>
        </authorList>
    </citation>
    <scope>IDENTIFICATION</scope>
</reference>
<protein>
    <recommendedName>
        <fullName>Uncharacterized protein YIR020C</fullName>
    </recommendedName>
</protein>
<proteinExistence type="predicted"/>
<gene>
    <name type="ordered locus">YIR020C</name>
</gene>
<accession>P40575</accession>
<accession>I2HB65</accession>